<name>YO121_YEAST</name>
<gene>
    <name type="ordered locus">YOR121C</name>
    <name type="ORF">O3272</name>
</gene>
<sequence length="101" mass="12384">MFNLSTYYNHTRNTQKQLLEYFERRPIWMYNPFFALFLRYVIDSFKVLSRQSKYFPVRFDSIGIHRFWQDNITSLDVPANNNVSGLNVIFLRNFKDNRFLQ</sequence>
<reference key="1">
    <citation type="journal article" date="1997" name="Nature">
        <title>The nucleotide sequence of Saccharomyces cerevisiae chromosome XV.</title>
        <authorList>
            <person name="Dujon B."/>
            <person name="Albermann K."/>
            <person name="Aldea M."/>
            <person name="Alexandraki D."/>
            <person name="Ansorge W."/>
            <person name="Arino J."/>
            <person name="Benes V."/>
            <person name="Bohn C."/>
            <person name="Bolotin-Fukuhara M."/>
            <person name="Bordonne R."/>
            <person name="Boyer J."/>
            <person name="Camasses A."/>
            <person name="Casamayor A."/>
            <person name="Casas C."/>
            <person name="Cheret G."/>
            <person name="Cziepluch C."/>
            <person name="Daignan-Fornier B."/>
            <person name="Dang V.-D."/>
            <person name="de Haan M."/>
            <person name="Delius H."/>
            <person name="Durand P."/>
            <person name="Fairhead C."/>
            <person name="Feldmann H."/>
            <person name="Gaillon L."/>
            <person name="Galisson F."/>
            <person name="Gamo F.-J."/>
            <person name="Gancedo C."/>
            <person name="Goffeau A."/>
            <person name="Goulding S.E."/>
            <person name="Grivell L.A."/>
            <person name="Habbig B."/>
            <person name="Hand N.J."/>
            <person name="Hani J."/>
            <person name="Hattenhorst U."/>
            <person name="Hebling U."/>
            <person name="Hernando Y."/>
            <person name="Herrero E."/>
            <person name="Heumann K."/>
            <person name="Hiesel R."/>
            <person name="Hilger F."/>
            <person name="Hofmann B."/>
            <person name="Hollenberg C.P."/>
            <person name="Hughes B."/>
            <person name="Jauniaux J.-C."/>
            <person name="Kalogeropoulos A."/>
            <person name="Katsoulou C."/>
            <person name="Kordes E."/>
            <person name="Lafuente M.J."/>
            <person name="Landt O."/>
            <person name="Louis E.J."/>
            <person name="Maarse A.C."/>
            <person name="Madania A."/>
            <person name="Mannhaupt G."/>
            <person name="Marck C."/>
            <person name="Martin R.P."/>
            <person name="Mewes H.-W."/>
            <person name="Michaux G."/>
            <person name="Paces V."/>
            <person name="Parle-McDermott A.G."/>
            <person name="Pearson B.M."/>
            <person name="Perrin A."/>
            <person name="Pettersson B."/>
            <person name="Poch O."/>
            <person name="Pohl T.M."/>
            <person name="Poirey R."/>
            <person name="Portetelle D."/>
            <person name="Pujol A."/>
            <person name="Purnelle B."/>
            <person name="Ramezani Rad M."/>
            <person name="Rechmann S."/>
            <person name="Schwager C."/>
            <person name="Schweizer M."/>
            <person name="Sor F."/>
            <person name="Sterky F."/>
            <person name="Tarassov I.A."/>
            <person name="Teodoru C."/>
            <person name="Tettelin H."/>
            <person name="Thierry A."/>
            <person name="Tobiasch E."/>
            <person name="Tzermia M."/>
            <person name="Uhlen M."/>
            <person name="Unseld M."/>
            <person name="Valens M."/>
            <person name="Vandenbol M."/>
            <person name="Vetter I."/>
            <person name="Vlcek C."/>
            <person name="Voet M."/>
            <person name="Volckaert G."/>
            <person name="Voss H."/>
            <person name="Wambutt R."/>
            <person name="Wedler H."/>
            <person name="Wiemann S."/>
            <person name="Winsor B."/>
            <person name="Wolfe K.H."/>
            <person name="Zollner A."/>
            <person name="Zumstein E."/>
            <person name="Kleine K."/>
        </authorList>
    </citation>
    <scope>NUCLEOTIDE SEQUENCE [LARGE SCALE GENOMIC DNA]</scope>
    <source>
        <strain>ATCC 204508 / S288c</strain>
    </source>
</reference>
<reference key="2">
    <citation type="journal article" date="2014" name="G3 (Bethesda)">
        <title>The reference genome sequence of Saccharomyces cerevisiae: Then and now.</title>
        <authorList>
            <person name="Engel S.R."/>
            <person name="Dietrich F.S."/>
            <person name="Fisk D.G."/>
            <person name="Binkley G."/>
            <person name="Balakrishnan R."/>
            <person name="Costanzo M.C."/>
            <person name="Dwight S.S."/>
            <person name="Hitz B.C."/>
            <person name="Karra K."/>
            <person name="Nash R.S."/>
            <person name="Weng S."/>
            <person name="Wong E.D."/>
            <person name="Lloyd P."/>
            <person name="Skrzypek M.S."/>
            <person name="Miyasato S.R."/>
            <person name="Simison M."/>
            <person name="Cherry J.M."/>
        </authorList>
    </citation>
    <scope>GENOME REANNOTATION</scope>
    <source>
        <strain>ATCC 204508 / S288c</strain>
    </source>
</reference>
<organism>
    <name type="scientific">Saccharomyces cerevisiae (strain ATCC 204508 / S288c)</name>
    <name type="common">Baker's yeast</name>
    <dbReference type="NCBI Taxonomy" id="559292"/>
    <lineage>
        <taxon>Eukaryota</taxon>
        <taxon>Fungi</taxon>
        <taxon>Dikarya</taxon>
        <taxon>Ascomycota</taxon>
        <taxon>Saccharomycotina</taxon>
        <taxon>Saccharomycetes</taxon>
        <taxon>Saccharomycetales</taxon>
        <taxon>Saccharomycetaceae</taxon>
        <taxon>Saccharomyces</taxon>
    </lineage>
</organism>
<accession>Q08521</accession>
<protein>
    <recommendedName>
        <fullName>Putative uncharacterized protein YOR121C</fullName>
    </recommendedName>
</protein>
<feature type="chain" id="PRO_0000299714" description="Putative uncharacterized protein YOR121C">
    <location>
        <begin position="1"/>
        <end position="101"/>
    </location>
</feature>
<proteinExistence type="uncertain"/>
<dbReference type="EMBL" id="Z75028">
    <property type="protein sequence ID" value="CAA99319.1"/>
    <property type="molecule type" value="Genomic_DNA"/>
</dbReference>
<dbReference type="PIR" id="S67006">
    <property type="entry name" value="S67006"/>
</dbReference>
<dbReference type="DIP" id="DIP-4458N"/>
<dbReference type="PaxDb" id="4932-YOR121C"/>
<dbReference type="EnsemblFungi" id="YOR121C_mRNA">
    <property type="protein sequence ID" value="YOR121C"/>
    <property type="gene ID" value="YOR121C"/>
</dbReference>
<dbReference type="AGR" id="SGD:S000005647"/>
<dbReference type="SGD" id="S000005647">
    <property type="gene designation" value="YOR121C"/>
</dbReference>
<dbReference type="HOGENOM" id="CLU_2293906_0_0_1"/>
<comment type="miscellaneous">
    <text evidence="1">Almost completely overlaps GCY1.</text>
</comment>
<comment type="caution">
    <text evidence="2">Product of a dubious gene prediction unlikely to encode a functional protein. Because of that it is not part of the S.cerevisiae S288c complete/reference proteome set.</text>
</comment>
<evidence type="ECO:0000305" key="1"/>
<evidence type="ECO:0000305" key="2">
    <source>
    </source>
</evidence>